<evidence type="ECO:0000255" key="1">
    <source>
        <dbReference type="HAMAP-Rule" id="MF_00735"/>
    </source>
</evidence>
<keyword id="KW-0963">Cytoplasm</keyword>
<keyword id="KW-0489">Methyltransferase</keyword>
<keyword id="KW-0949">S-adenosyl-L-methionine</keyword>
<keyword id="KW-0808">Transferase</keyword>
<name>PRMA_STAA2</name>
<dbReference type="EC" id="2.1.1.-" evidence="1"/>
<dbReference type="EMBL" id="CP000736">
    <property type="protein sequence ID" value="ABR52518.1"/>
    <property type="molecule type" value="Genomic_DNA"/>
</dbReference>
<dbReference type="SMR" id="A6U250"/>
<dbReference type="KEGG" id="sah:SaurJH1_1670"/>
<dbReference type="HOGENOM" id="CLU_049382_0_1_9"/>
<dbReference type="GO" id="GO:0005737">
    <property type="term" value="C:cytoplasm"/>
    <property type="evidence" value="ECO:0007669"/>
    <property type="project" value="UniProtKB-SubCell"/>
</dbReference>
<dbReference type="GO" id="GO:0016279">
    <property type="term" value="F:protein-lysine N-methyltransferase activity"/>
    <property type="evidence" value="ECO:0007669"/>
    <property type="project" value="RHEA"/>
</dbReference>
<dbReference type="GO" id="GO:0032259">
    <property type="term" value="P:methylation"/>
    <property type="evidence" value="ECO:0007669"/>
    <property type="project" value="UniProtKB-KW"/>
</dbReference>
<dbReference type="CDD" id="cd02440">
    <property type="entry name" value="AdoMet_MTases"/>
    <property type="match status" value="1"/>
</dbReference>
<dbReference type="Gene3D" id="3.40.50.150">
    <property type="entry name" value="Vaccinia Virus protein VP39"/>
    <property type="match status" value="1"/>
</dbReference>
<dbReference type="HAMAP" id="MF_00735">
    <property type="entry name" value="Methyltr_PrmA"/>
    <property type="match status" value="1"/>
</dbReference>
<dbReference type="InterPro" id="IPR050078">
    <property type="entry name" value="Ribosomal_L11_MeTrfase_PrmA"/>
</dbReference>
<dbReference type="InterPro" id="IPR004498">
    <property type="entry name" value="Ribosomal_PrmA_MeTrfase"/>
</dbReference>
<dbReference type="InterPro" id="IPR029063">
    <property type="entry name" value="SAM-dependent_MTases_sf"/>
</dbReference>
<dbReference type="NCBIfam" id="TIGR00406">
    <property type="entry name" value="prmA"/>
    <property type="match status" value="1"/>
</dbReference>
<dbReference type="PANTHER" id="PTHR43648">
    <property type="entry name" value="ELECTRON TRANSFER FLAVOPROTEIN BETA SUBUNIT LYSINE METHYLTRANSFERASE"/>
    <property type="match status" value="1"/>
</dbReference>
<dbReference type="PANTHER" id="PTHR43648:SF1">
    <property type="entry name" value="ELECTRON TRANSFER FLAVOPROTEIN BETA SUBUNIT LYSINE METHYLTRANSFERASE"/>
    <property type="match status" value="1"/>
</dbReference>
<dbReference type="Pfam" id="PF06325">
    <property type="entry name" value="PrmA"/>
    <property type="match status" value="1"/>
</dbReference>
<dbReference type="PIRSF" id="PIRSF000401">
    <property type="entry name" value="RPL11_MTase"/>
    <property type="match status" value="1"/>
</dbReference>
<dbReference type="SUPFAM" id="SSF53335">
    <property type="entry name" value="S-adenosyl-L-methionine-dependent methyltransferases"/>
    <property type="match status" value="1"/>
</dbReference>
<gene>
    <name evidence="1" type="primary">prmA</name>
    <name type="ordered locus">SaurJH1_1670</name>
</gene>
<accession>A6U250</accession>
<protein>
    <recommendedName>
        <fullName evidence="1">Ribosomal protein L11 methyltransferase</fullName>
        <shortName evidence="1">L11 Mtase</shortName>
        <ecNumber evidence="1">2.1.1.-</ecNumber>
    </recommendedName>
</protein>
<organism>
    <name type="scientific">Staphylococcus aureus (strain JH1)</name>
    <dbReference type="NCBI Taxonomy" id="359787"/>
    <lineage>
        <taxon>Bacteria</taxon>
        <taxon>Bacillati</taxon>
        <taxon>Bacillota</taxon>
        <taxon>Bacilli</taxon>
        <taxon>Bacillales</taxon>
        <taxon>Staphylococcaceae</taxon>
        <taxon>Staphylococcus</taxon>
    </lineage>
</organism>
<sequence length="312" mass="35527">MNWTELSIIINHEAVELATNILENHGSNGVVIEDSDDLINQPEDKYGEIYALKKEDYPDKGVRLKAYFNEMTYDDKLRQQIKDELLNLDELDQHNIQFSEQIIAETDWENEWKNYFHPFRASKKFTIVPSWETYAKEADEELCIELDPGMAFGTGDHPTTSMCLKAIETYVLPQHSVIDVGTGSGILSIASHLIGVKRIKALDIDEMAVSVAKENFRRNHCETLIEAVPGNLLKDETEKFDIVIANILAHIIDEMIEDAYNTLNEGGYFITSGIIKEKYEGIQSHMERVGFKIISEQHDNGWVCLVGQKVSE</sequence>
<proteinExistence type="inferred from homology"/>
<reference key="1">
    <citation type="submission" date="2007-06" db="EMBL/GenBank/DDBJ databases">
        <title>Complete sequence of chromosome of Staphylococcus aureus subsp. aureus JH1.</title>
        <authorList>
            <consortium name="US DOE Joint Genome Institute"/>
            <person name="Copeland A."/>
            <person name="Lucas S."/>
            <person name="Lapidus A."/>
            <person name="Barry K."/>
            <person name="Detter J.C."/>
            <person name="Glavina del Rio T."/>
            <person name="Hammon N."/>
            <person name="Israni S."/>
            <person name="Dalin E."/>
            <person name="Tice H."/>
            <person name="Pitluck S."/>
            <person name="Chain P."/>
            <person name="Malfatti S."/>
            <person name="Shin M."/>
            <person name="Vergez L."/>
            <person name="Schmutz J."/>
            <person name="Larimer F."/>
            <person name="Land M."/>
            <person name="Hauser L."/>
            <person name="Kyrpides N."/>
            <person name="Ivanova N."/>
            <person name="Tomasz A."/>
            <person name="Richardson P."/>
        </authorList>
    </citation>
    <scope>NUCLEOTIDE SEQUENCE [LARGE SCALE GENOMIC DNA]</scope>
    <source>
        <strain>JH1</strain>
    </source>
</reference>
<feature type="chain" id="PRO_1000083363" description="Ribosomal protein L11 methyltransferase">
    <location>
        <begin position="1"/>
        <end position="312"/>
    </location>
</feature>
<feature type="binding site" evidence="1">
    <location>
        <position position="160"/>
    </location>
    <ligand>
        <name>S-adenosyl-L-methionine</name>
        <dbReference type="ChEBI" id="CHEBI:59789"/>
    </ligand>
</feature>
<feature type="binding site" evidence="1">
    <location>
        <position position="181"/>
    </location>
    <ligand>
        <name>S-adenosyl-L-methionine</name>
        <dbReference type="ChEBI" id="CHEBI:59789"/>
    </ligand>
</feature>
<feature type="binding site" evidence="1">
    <location>
        <position position="203"/>
    </location>
    <ligand>
        <name>S-adenosyl-L-methionine</name>
        <dbReference type="ChEBI" id="CHEBI:59789"/>
    </ligand>
</feature>
<feature type="binding site" evidence="1">
    <location>
        <position position="246"/>
    </location>
    <ligand>
        <name>S-adenosyl-L-methionine</name>
        <dbReference type="ChEBI" id="CHEBI:59789"/>
    </ligand>
</feature>
<comment type="function">
    <text evidence="1">Methylates ribosomal protein L11.</text>
</comment>
<comment type="catalytic activity">
    <reaction evidence="1">
        <text>L-lysyl-[protein] + 3 S-adenosyl-L-methionine = N(6),N(6),N(6)-trimethyl-L-lysyl-[protein] + 3 S-adenosyl-L-homocysteine + 3 H(+)</text>
        <dbReference type="Rhea" id="RHEA:54192"/>
        <dbReference type="Rhea" id="RHEA-COMP:9752"/>
        <dbReference type="Rhea" id="RHEA-COMP:13826"/>
        <dbReference type="ChEBI" id="CHEBI:15378"/>
        <dbReference type="ChEBI" id="CHEBI:29969"/>
        <dbReference type="ChEBI" id="CHEBI:57856"/>
        <dbReference type="ChEBI" id="CHEBI:59789"/>
        <dbReference type="ChEBI" id="CHEBI:61961"/>
    </reaction>
</comment>
<comment type="subcellular location">
    <subcellularLocation>
        <location evidence="1">Cytoplasm</location>
    </subcellularLocation>
</comment>
<comment type="similarity">
    <text evidence="1">Belongs to the methyltransferase superfamily. PrmA family.</text>
</comment>